<sequence length="312" mass="33813">MNSALFLPIALLLDRLLGEPPRWHPLVGFGRLVKAVERAAYPAAPGAEPVWRMRLRGAAAIALLLAPFTLAAWALARLPLLEIIVPVALLYLAVGARSLAQHAEVVRKALAEGDLQLARERVGWIVSRDTRELDEAGVARATIESVLENGSDAVFAALFWFLVLGAPGAVLYRLANTLDAMWGYKNERYLHFGWAAARFDDMLNYLPARLTALTYLLLGHAAKGWRCWRTQAPTWYSPNAGPVMAAGAGALGVSLGGGARYHGQWKERPPLGCGPTPTHEDIGRAVRLVNRGMWLWAALSLAAAILIGAIHA</sequence>
<accession>Q7NXQ1</accession>
<dbReference type="EMBL" id="AE016825">
    <property type="protein sequence ID" value="AAQ59251.1"/>
    <property type="molecule type" value="Genomic_DNA"/>
</dbReference>
<dbReference type="RefSeq" id="WP_011135127.1">
    <property type="nucleotide sequence ID" value="NC_005085.1"/>
</dbReference>
<dbReference type="STRING" id="243365.CV_1575"/>
<dbReference type="KEGG" id="cvi:CV_1575"/>
<dbReference type="eggNOG" id="COG1270">
    <property type="taxonomic scope" value="Bacteria"/>
</dbReference>
<dbReference type="HOGENOM" id="CLU_054212_1_0_4"/>
<dbReference type="OrthoDB" id="9811967at2"/>
<dbReference type="UniPathway" id="UPA00148"/>
<dbReference type="Proteomes" id="UP000001424">
    <property type="component" value="Chromosome"/>
</dbReference>
<dbReference type="GO" id="GO:0005886">
    <property type="term" value="C:plasma membrane"/>
    <property type="evidence" value="ECO:0007669"/>
    <property type="project" value="UniProtKB-SubCell"/>
</dbReference>
<dbReference type="GO" id="GO:0015420">
    <property type="term" value="F:ABC-type vitamin B12 transporter activity"/>
    <property type="evidence" value="ECO:0007669"/>
    <property type="project" value="UniProtKB-UniRule"/>
</dbReference>
<dbReference type="GO" id="GO:0048472">
    <property type="term" value="F:threonine-phosphate decarboxylase activity"/>
    <property type="evidence" value="ECO:0007669"/>
    <property type="project" value="InterPro"/>
</dbReference>
<dbReference type="GO" id="GO:0009236">
    <property type="term" value="P:cobalamin biosynthetic process"/>
    <property type="evidence" value="ECO:0007669"/>
    <property type="project" value="UniProtKB-UniRule"/>
</dbReference>
<dbReference type="HAMAP" id="MF_00024">
    <property type="entry name" value="CobD_CbiB"/>
    <property type="match status" value="1"/>
</dbReference>
<dbReference type="InterPro" id="IPR004485">
    <property type="entry name" value="Cobalamin_biosynth_CobD/CbiB"/>
</dbReference>
<dbReference type="NCBIfam" id="TIGR00380">
    <property type="entry name" value="cobal_cbiB"/>
    <property type="match status" value="1"/>
</dbReference>
<dbReference type="PANTHER" id="PTHR34308">
    <property type="entry name" value="COBALAMIN BIOSYNTHESIS PROTEIN CBIB"/>
    <property type="match status" value="1"/>
</dbReference>
<dbReference type="PANTHER" id="PTHR34308:SF1">
    <property type="entry name" value="COBALAMIN BIOSYNTHESIS PROTEIN CBIB"/>
    <property type="match status" value="1"/>
</dbReference>
<dbReference type="Pfam" id="PF03186">
    <property type="entry name" value="CobD_Cbib"/>
    <property type="match status" value="1"/>
</dbReference>
<gene>
    <name evidence="1" type="primary">cobD</name>
    <name type="ordered locus">CV_1575</name>
</gene>
<protein>
    <recommendedName>
        <fullName evidence="1">Cobalamin biosynthesis protein CobD</fullName>
    </recommendedName>
</protein>
<comment type="function">
    <text evidence="1">Converts cobyric acid to cobinamide by the addition of aminopropanol on the F carboxylic group.</text>
</comment>
<comment type="pathway">
    <text evidence="1">Cofactor biosynthesis; adenosylcobalamin biosynthesis.</text>
</comment>
<comment type="subcellular location">
    <subcellularLocation>
        <location evidence="1">Cell membrane</location>
        <topology evidence="1">Multi-pass membrane protein</topology>
    </subcellularLocation>
</comment>
<comment type="similarity">
    <text evidence="1">Belongs to the CobD/CbiB family.</text>
</comment>
<keyword id="KW-1003">Cell membrane</keyword>
<keyword id="KW-0169">Cobalamin biosynthesis</keyword>
<keyword id="KW-0472">Membrane</keyword>
<keyword id="KW-1185">Reference proteome</keyword>
<keyword id="KW-0812">Transmembrane</keyword>
<keyword id="KW-1133">Transmembrane helix</keyword>
<name>COBD_CHRVO</name>
<evidence type="ECO:0000255" key="1">
    <source>
        <dbReference type="HAMAP-Rule" id="MF_00024"/>
    </source>
</evidence>
<feature type="chain" id="PRO_1000090205" description="Cobalamin biosynthesis protein CobD">
    <location>
        <begin position="1"/>
        <end position="312"/>
    </location>
</feature>
<feature type="transmembrane region" description="Helical" evidence="1">
    <location>
        <begin position="61"/>
        <end position="81"/>
    </location>
</feature>
<feature type="transmembrane region" description="Helical" evidence="1">
    <location>
        <begin position="83"/>
        <end position="103"/>
    </location>
</feature>
<feature type="transmembrane region" description="Helical" evidence="1">
    <location>
        <begin position="152"/>
        <end position="172"/>
    </location>
</feature>
<feature type="transmembrane region" description="Helical" evidence="1">
    <location>
        <begin position="292"/>
        <end position="312"/>
    </location>
</feature>
<organism>
    <name type="scientific">Chromobacterium violaceum (strain ATCC 12472 / DSM 30191 / JCM 1249 / CCUG 213 / NBRC 12614 / NCIMB 9131 / NCTC 9757 / MK)</name>
    <dbReference type="NCBI Taxonomy" id="243365"/>
    <lineage>
        <taxon>Bacteria</taxon>
        <taxon>Pseudomonadati</taxon>
        <taxon>Pseudomonadota</taxon>
        <taxon>Betaproteobacteria</taxon>
        <taxon>Neisseriales</taxon>
        <taxon>Chromobacteriaceae</taxon>
        <taxon>Chromobacterium</taxon>
    </lineage>
</organism>
<reference key="1">
    <citation type="journal article" date="2003" name="Proc. Natl. Acad. Sci. U.S.A.">
        <title>The complete genome sequence of Chromobacterium violaceum reveals remarkable and exploitable bacterial adaptability.</title>
        <authorList>
            <person name="Vasconcelos A.T.R."/>
            <person name="de Almeida D.F."/>
            <person name="Hungria M."/>
            <person name="Guimaraes C.T."/>
            <person name="Antonio R.V."/>
            <person name="Almeida F.C."/>
            <person name="de Almeida L.G.P."/>
            <person name="de Almeida R."/>
            <person name="Alves-Gomes J.A."/>
            <person name="Andrade E.M."/>
            <person name="Araripe J."/>
            <person name="de Araujo M.F.F."/>
            <person name="Astolfi-Filho S."/>
            <person name="Azevedo V."/>
            <person name="Baptista A.J."/>
            <person name="Bataus L.A.M."/>
            <person name="Batista J.S."/>
            <person name="Belo A."/>
            <person name="van den Berg C."/>
            <person name="Bogo M."/>
            <person name="Bonatto S."/>
            <person name="Bordignon J."/>
            <person name="Brigido M.M."/>
            <person name="Brito C.A."/>
            <person name="Brocchi M."/>
            <person name="Burity H.A."/>
            <person name="Camargo A.A."/>
            <person name="Cardoso D.D.P."/>
            <person name="Carneiro N.P."/>
            <person name="Carraro D.M."/>
            <person name="Carvalho C.M.B."/>
            <person name="Cascardo J.C.M."/>
            <person name="Cavada B.S."/>
            <person name="Chueire L.M.O."/>
            <person name="Creczynski-Pasa T.B."/>
            <person name="Cunha-Junior N.C."/>
            <person name="Fagundes N."/>
            <person name="Falcao C.L."/>
            <person name="Fantinatti F."/>
            <person name="Farias I.P."/>
            <person name="Felipe M.S.S."/>
            <person name="Ferrari L.P."/>
            <person name="Ferro J.A."/>
            <person name="Ferro M.I.T."/>
            <person name="Franco G.R."/>
            <person name="Freitas N.S.A."/>
            <person name="Furlan L.R."/>
            <person name="Gazzinelli R.T."/>
            <person name="Gomes E.A."/>
            <person name="Goncalves P.R."/>
            <person name="Grangeiro T.B."/>
            <person name="Grattapaglia D."/>
            <person name="Grisard E.C."/>
            <person name="Hanna E.S."/>
            <person name="Jardim S.N."/>
            <person name="Laurino J."/>
            <person name="Leoi L.C.T."/>
            <person name="Lima L.F.A."/>
            <person name="Loureiro M.F."/>
            <person name="Lyra M.C.C.P."/>
            <person name="Madeira H.M.F."/>
            <person name="Manfio G.P."/>
            <person name="Maranhao A.Q."/>
            <person name="Martins W.S."/>
            <person name="di Mauro S.M.Z."/>
            <person name="de Medeiros S.R.B."/>
            <person name="Meissner R.V."/>
            <person name="Moreira M.A.M."/>
            <person name="Nascimento F.F."/>
            <person name="Nicolas M.F."/>
            <person name="Oliveira J.G."/>
            <person name="Oliveira S.C."/>
            <person name="Paixao R.F.C."/>
            <person name="Parente J.A."/>
            <person name="Pedrosa F.O."/>
            <person name="Pena S.D.J."/>
            <person name="Pereira J.O."/>
            <person name="Pereira M."/>
            <person name="Pinto L.S.R.C."/>
            <person name="Pinto L.S."/>
            <person name="Porto J.I.R."/>
            <person name="Potrich D.P."/>
            <person name="Ramalho-Neto C.E."/>
            <person name="Reis A.M.M."/>
            <person name="Rigo L.U."/>
            <person name="Rondinelli E."/>
            <person name="Santos E.B.P."/>
            <person name="Santos F.R."/>
            <person name="Schneider M.P.C."/>
            <person name="Seuanez H.N."/>
            <person name="Silva A.M.R."/>
            <person name="da Silva A.L.C."/>
            <person name="Silva D.W."/>
            <person name="Silva R."/>
            <person name="Simoes I.C."/>
            <person name="Simon D."/>
            <person name="Soares C.M.A."/>
            <person name="Soares R.B.A."/>
            <person name="Souza E.M."/>
            <person name="Souza K.R.L."/>
            <person name="Souza R.C."/>
            <person name="Steffens M.B.R."/>
            <person name="Steindel M."/>
            <person name="Teixeira S.R."/>
            <person name="Urmenyi T."/>
            <person name="Vettore A."/>
            <person name="Wassem R."/>
            <person name="Zaha A."/>
            <person name="Simpson A.J.G."/>
        </authorList>
    </citation>
    <scope>NUCLEOTIDE SEQUENCE [LARGE SCALE GENOMIC DNA]</scope>
    <source>
        <strain>ATCC 12472 / DSM 30191 / JCM 1249 / CCUG 213 / NBRC 12614 / NCIMB 9131 / NCTC 9757 / MK</strain>
    </source>
</reference>
<proteinExistence type="inferred from homology"/>